<sequence>MSILIDKETRVLCQGFTGKQGTFHSEQAIEYGTQMVGGVTPGKGGQSHLGLPIFNSVHEAVEETSADATMIFVPAPFCKDSIIEAVDAGVRLVVCITEGIPVLDMLEVKAYLRQHPDVRMIGPNCPGVITPGECKIGIMPGHIHQRGKVGIVSRSGTLTYEAVNQTTQMGFGQSTCVGIGGDPIPGTSFIDVLEMFEKDSQTQAIVMVGEIGGTAEEEAAEFIQSNVKKPVISYIAGVTAPPGKRMGHAGAIIAGGKGTAADKYAALEAAGVFVVKSPAEIGKGVAEATGWSTH</sequence>
<keyword id="KW-0436">Ligase</keyword>
<keyword id="KW-0547">Nucleotide-binding</keyword>
<keyword id="KW-1185">Reference proteome</keyword>
<keyword id="KW-0816">Tricarboxylic acid cycle</keyword>
<protein>
    <recommendedName>
        <fullName evidence="1">Succinate--CoA ligase [ADP-forming] subunit alpha</fullName>
        <ecNumber evidence="1">6.2.1.5</ecNumber>
    </recommendedName>
    <alternativeName>
        <fullName evidence="1">Succinyl-CoA synthetase subunit alpha</fullName>
        <shortName evidence="1">SCS-alpha</shortName>
    </alternativeName>
</protein>
<name>SUCD_COXBU</name>
<comment type="function">
    <text evidence="1">Succinyl-CoA synthetase functions in the citric acid cycle (TCA), coupling the hydrolysis of succinyl-CoA to the synthesis of either ATP or GTP and thus represents the only step of substrate-level phosphorylation in the TCA. The alpha subunit of the enzyme binds the substrates coenzyme A and phosphate, while succinate binding and nucleotide specificity is provided by the beta subunit.</text>
</comment>
<comment type="catalytic activity">
    <reaction evidence="1">
        <text>succinate + ATP + CoA = succinyl-CoA + ADP + phosphate</text>
        <dbReference type="Rhea" id="RHEA:17661"/>
        <dbReference type="ChEBI" id="CHEBI:30031"/>
        <dbReference type="ChEBI" id="CHEBI:30616"/>
        <dbReference type="ChEBI" id="CHEBI:43474"/>
        <dbReference type="ChEBI" id="CHEBI:57287"/>
        <dbReference type="ChEBI" id="CHEBI:57292"/>
        <dbReference type="ChEBI" id="CHEBI:456216"/>
        <dbReference type="EC" id="6.2.1.5"/>
    </reaction>
    <physiologicalReaction direction="right-to-left" evidence="1">
        <dbReference type="Rhea" id="RHEA:17663"/>
    </physiologicalReaction>
</comment>
<comment type="catalytic activity">
    <reaction evidence="1">
        <text>GTP + succinate + CoA = succinyl-CoA + GDP + phosphate</text>
        <dbReference type="Rhea" id="RHEA:22120"/>
        <dbReference type="ChEBI" id="CHEBI:30031"/>
        <dbReference type="ChEBI" id="CHEBI:37565"/>
        <dbReference type="ChEBI" id="CHEBI:43474"/>
        <dbReference type="ChEBI" id="CHEBI:57287"/>
        <dbReference type="ChEBI" id="CHEBI:57292"/>
        <dbReference type="ChEBI" id="CHEBI:58189"/>
    </reaction>
    <physiologicalReaction direction="right-to-left" evidence="1">
        <dbReference type="Rhea" id="RHEA:22122"/>
    </physiologicalReaction>
</comment>
<comment type="pathway">
    <text evidence="1">Carbohydrate metabolism; tricarboxylic acid cycle; succinate from succinyl-CoA (ligase route): step 1/1.</text>
</comment>
<comment type="subunit">
    <text evidence="1">Heterotetramer of two alpha and two beta subunits.</text>
</comment>
<comment type="similarity">
    <text evidence="1">Belongs to the succinate/malate CoA ligase alpha subunit family.</text>
</comment>
<reference key="1">
    <citation type="submission" date="1995-02" db="EMBL/GenBank/DDBJ databases">
        <authorList>
            <person name="Schimmels J.A."/>
            <person name="Mallavia L.P."/>
        </authorList>
    </citation>
    <scope>NUCLEOTIDE SEQUENCE [GENOMIC DNA]</scope>
    <source>
        <strain>Nine Mile phase I</strain>
    </source>
</reference>
<reference key="2">
    <citation type="submission" date="1994-03" db="EMBL/GenBank/DDBJ databases">
        <authorList>
            <person name="Thiele D."/>
            <person name="Willems H."/>
            <person name="Oswald W."/>
            <person name="Krauss H."/>
        </authorList>
    </citation>
    <scope>NUCLEOTIDE SEQUENCE [GENOMIC DNA]</scope>
    <source>
        <strain>Nine Mile phase I</strain>
    </source>
</reference>
<reference key="3">
    <citation type="journal article" date="2003" name="Proc. Natl. Acad. Sci. U.S.A.">
        <title>Complete genome sequence of the Q-fever pathogen, Coxiella burnetii.</title>
        <authorList>
            <person name="Seshadri R."/>
            <person name="Paulsen I.T."/>
            <person name="Eisen J.A."/>
            <person name="Read T.D."/>
            <person name="Nelson K.E."/>
            <person name="Nelson W.C."/>
            <person name="Ward N.L."/>
            <person name="Tettelin H."/>
            <person name="Davidsen T.M."/>
            <person name="Beanan M.J."/>
            <person name="DeBoy R.T."/>
            <person name="Daugherty S.C."/>
            <person name="Brinkac L.M."/>
            <person name="Madupu R."/>
            <person name="Dodson R.J."/>
            <person name="Khouri H.M."/>
            <person name="Lee K.H."/>
            <person name="Carty H.A."/>
            <person name="Scanlan D."/>
            <person name="Heinzen R.A."/>
            <person name="Thompson H.A."/>
            <person name="Samuel J.E."/>
            <person name="Fraser C.M."/>
            <person name="Heidelberg J.F."/>
        </authorList>
    </citation>
    <scope>NUCLEOTIDE SEQUENCE [LARGE SCALE GENOMIC DNA]</scope>
    <source>
        <strain>RSA 493 / Nine Mile phase I</strain>
    </source>
</reference>
<proteinExistence type="inferred from homology"/>
<feature type="chain" id="PRO_0000102790" description="Succinate--CoA ligase [ADP-forming] subunit alpha">
    <location>
        <begin position="1"/>
        <end position="294"/>
    </location>
</feature>
<feature type="active site" description="Tele-phosphohistidine intermediate" evidence="1">
    <location>
        <position position="248"/>
    </location>
</feature>
<feature type="binding site" evidence="1">
    <location>
        <begin position="17"/>
        <end position="20"/>
    </location>
    <ligand>
        <name>CoA</name>
        <dbReference type="ChEBI" id="CHEBI:57287"/>
    </ligand>
</feature>
<feature type="binding site" evidence="1">
    <location>
        <position position="43"/>
    </location>
    <ligand>
        <name>CoA</name>
        <dbReference type="ChEBI" id="CHEBI:57287"/>
    </ligand>
</feature>
<feature type="binding site" evidence="1">
    <location>
        <begin position="96"/>
        <end position="98"/>
    </location>
    <ligand>
        <name>CoA</name>
        <dbReference type="ChEBI" id="CHEBI:57287"/>
    </ligand>
</feature>
<feature type="binding site" evidence="1">
    <location>
        <position position="160"/>
    </location>
    <ligand>
        <name>substrate</name>
        <note>ligand shared with subunit beta</note>
    </ligand>
</feature>
<feature type="sequence conflict" description="In Ref. 2." evidence="2" ref="2">
    <original>GKGVAEATGWSTH</original>
    <variation>AKALLRQQAGQLI</variation>
    <location>
        <begin position="282"/>
        <end position="294"/>
    </location>
</feature>
<feature type="sequence conflict" description="In Ref. 1; AAA61788." evidence="2" ref="1">
    <original>A</original>
    <variation>R</variation>
    <location>
        <position position="286"/>
    </location>
</feature>
<evidence type="ECO:0000255" key="1">
    <source>
        <dbReference type="HAMAP-Rule" id="MF_01988"/>
    </source>
</evidence>
<evidence type="ECO:0000305" key="2"/>
<gene>
    <name evidence="1" type="primary">sucD</name>
    <name type="ordered locus">CBU_1396</name>
</gene>
<accession>P53591</accession>
<organism>
    <name type="scientific">Coxiella burnetii (strain RSA 493 / Nine Mile phase I)</name>
    <dbReference type="NCBI Taxonomy" id="227377"/>
    <lineage>
        <taxon>Bacteria</taxon>
        <taxon>Pseudomonadati</taxon>
        <taxon>Pseudomonadota</taxon>
        <taxon>Gammaproteobacteria</taxon>
        <taxon>Legionellales</taxon>
        <taxon>Coxiellaceae</taxon>
        <taxon>Coxiella</taxon>
    </lineage>
</organism>
<dbReference type="EC" id="6.2.1.5" evidence="1"/>
<dbReference type="EMBL" id="U07789">
    <property type="protein sequence ID" value="AAA61788.1"/>
    <property type="molecule type" value="Unassigned_DNA"/>
</dbReference>
<dbReference type="EMBL" id="X77919">
    <property type="protein sequence ID" value="CAA54877.1"/>
    <property type="molecule type" value="Genomic_DNA"/>
</dbReference>
<dbReference type="EMBL" id="AE016828">
    <property type="protein sequence ID" value="AAO90895.1"/>
    <property type="molecule type" value="Genomic_DNA"/>
</dbReference>
<dbReference type="RefSeq" id="NP_820381.1">
    <property type="nucleotide sequence ID" value="NC_002971.4"/>
</dbReference>
<dbReference type="RefSeq" id="WP_005771707.1">
    <property type="nucleotide sequence ID" value="NZ_CCYB01000027.1"/>
</dbReference>
<dbReference type="SMR" id="P53591"/>
<dbReference type="STRING" id="227377.CBU_1396"/>
<dbReference type="DNASU" id="1209302"/>
<dbReference type="EnsemblBacteria" id="AAO90895">
    <property type="protein sequence ID" value="AAO90895"/>
    <property type="gene ID" value="CBU_1396"/>
</dbReference>
<dbReference type="GeneID" id="1209302"/>
<dbReference type="KEGG" id="cbu:CBU_1396"/>
<dbReference type="PATRIC" id="fig|227377.7.peg.1398"/>
<dbReference type="eggNOG" id="COG0074">
    <property type="taxonomic scope" value="Bacteria"/>
</dbReference>
<dbReference type="HOGENOM" id="CLU_052104_0_0_6"/>
<dbReference type="OrthoDB" id="9807196at2"/>
<dbReference type="UniPathway" id="UPA00223">
    <property type="reaction ID" value="UER00999"/>
</dbReference>
<dbReference type="Proteomes" id="UP000002671">
    <property type="component" value="Chromosome"/>
</dbReference>
<dbReference type="GO" id="GO:0009361">
    <property type="term" value="C:succinate-CoA ligase complex (ADP-forming)"/>
    <property type="evidence" value="ECO:0000318"/>
    <property type="project" value="GO_Central"/>
</dbReference>
<dbReference type="GO" id="GO:0000166">
    <property type="term" value="F:nucleotide binding"/>
    <property type="evidence" value="ECO:0007669"/>
    <property type="project" value="UniProtKB-KW"/>
</dbReference>
<dbReference type="GO" id="GO:0004775">
    <property type="term" value="F:succinate-CoA ligase (ADP-forming) activity"/>
    <property type="evidence" value="ECO:0000318"/>
    <property type="project" value="GO_Central"/>
</dbReference>
<dbReference type="GO" id="GO:0004776">
    <property type="term" value="F:succinate-CoA ligase (GDP-forming) activity"/>
    <property type="evidence" value="ECO:0000318"/>
    <property type="project" value="GO_Central"/>
</dbReference>
<dbReference type="GO" id="GO:0006099">
    <property type="term" value="P:tricarboxylic acid cycle"/>
    <property type="evidence" value="ECO:0000318"/>
    <property type="project" value="GO_Central"/>
</dbReference>
<dbReference type="FunFam" id="3.40.50.261:FF:000002">
    <property type="entry name" value="Succinate--CoA ligase [ADP-forming] subunit alpha"/>
    <property type="match status" value="1"/>
</dbReference>
<dbReference type="FunFam" id="3.40.50.720:FF:000002">
    <property type="entry name" value="Succinate--CoA ligase [ADP-forming] subunit alpha"/>
    <property type="match status" value="1"/>
</dbReference>
<dbReference type="Gene3D" id="3.40.50.720">
    <property type="entry name" value="NAD(P)-binding Rossmann-like Domain"/>
    <property type="match status" value="1"/>
</dbReference>
<dbReference type="Gene3D" id="3.40.50.261">
    <property type="entry name" value="Succinyl-CoA synthetase domains"/>
    <property type="match status" value="1"/>
</dbReference>
<dbReference type="HAMAP" id="MF_01988">
    <property type="entry name" value="Succ_CoA_alpha"/>
    <property type="match status" value="1"/>
</dbReference>
<dbReference type="InterPro" id="IPR017440">
    <property type="entry name" value="Cit_synth/succinyl-CoA_lig_AS"/>
</dbReference>
<dbReference type="InterPro" id="IPR033847">
    <property type="entry name" value="Citrt_syn/SCS-alpha_CS"/>
</dbReference>
<dbReference type="InterPro" id="IPR003781">
    <property type="entry name" value="CoA-bd"/>
</dbReference>
<dbReference type="InterPro" id="IPR005810">
    <property type="entry name" value="CoA_lig_alpha"/>
</dbReference>
<dbReference type="InterPro" id="IPR036291">
    <property type="entry name" value="NAD(P)-bd_dom_sf"/>
</dbReference>
<dbReference type="InterPro" id="IPR005811">
    <property type="entry name" value="SUCC_ACL_C"/>
</dbReference>
<dbReference type="InterPro" id="IPR016102">
    <property type="entry name" value="Succinyl-CoA_synth-like"/>
</dbReference>
<dbReference type="NCBIfam" id="NF004230">
    <property type="entry name" value="PRK05678.1"/>
    <property type="match status" value="1"/>
</dbReference>
<dbReference type="NCBIfam" id="TIGR01019">
    <property type="entry name" value="sucCoAalpha"/>
    <property type="match status" value="1"/>
</dbReference>
<dbReference type="PANTHER" id="PTHR11117:SF2">
    <property type="entry name" value="SUCCINATE--COA LIGASE [ADP_GDP-FORMING] SUBUNIT ALPHA, MITOCHONDRIAL"/>
    <property type="match status" value="1"/>
</dbReference>
<dbReference type="PANTHER" id="PTHR11117">
    <property type="entry name" value="SUCCINYL-COA LIGASE SUBUNIT ALPHA"/>
    <property type="match status" value="1"/>
</dbReference>
<dbReference type="Pfam" id="PF02629">
    <property type="entry name" value="CoA_binding"/>
    <property type="match status" value="1"/>
</dbReference>
<dbReference type="Pfam" id="PF00549">
    <property type="entry name" value="Ligase_CoA"/>
    <property type="match status" value="1"/>
</dbReference>
<dbReference type="PIRSF" id="PIRSF001553">
    <property type="entry name" value="SucCS_alpha"/>
    <property type="match status" value="1"/>
</dbReference>
<dbReference type="PRINTS" id="PR01798">
    <property type="entry name" value="SCOASYNTHASE"/>
</dbReference>
<dbReference type="SMART" id="SM00881">
    <property type="entry name" value="CoA_binding"/>
    <property type="match status" value="1"/>
</dbReference>
<dbReference type="SUPFAM" id="SSF51735">
    <property type="entry name" value="NAD(P)-binding Rossmann-fold domains"/>
    <property type="match status" value="1"/>
</dbReference>
<dbReference type="SUPFAM" id="SSF52210">
    <property type="entry name" value="Succinyl-CoA synthetase domains"/>
    <property type="match status" value="1"/>
</dbReference>
<dbReference type="PROSITE" id="PS01216">
    <property type="entry name" value="SUCCINYL_COA_LIG_1"/>
    <property type="match status" value="1"/>
</dbReference>
<dbReference type="PROSITE" id="PS00399">
    <property type="entry name" value="SUCCINYL_COA_LIG_2"/>
    <property type="match status" value="1"/>
</dbReference>